<organism>
    <name type="scientific">Fusarium oxysporum f. sp. lycopersici (strain 4287 / CBS 123668 / FGSC 9935 / NRRL 34936)</name>
    <name type="common">Fusarium vascular wilt of tomato</name>
    <dbReference type="NCBI Taxonomy" id="426428"/>
    <lineage>
        <taxon>Eukaryota</taxon>
        <taxon>Fungi</taxon>
        <taxon>Dikarya</taxon>
        <taxon>Ascomycota</taxon>
        <taxon>Pezizomycotina</taxon>
        <taxon>Sordariomycetes</taxon>
        <taxon>Hypocreomycetidae</taxon>
        <taxon>Hypocreales</taxon>
        <taxon>Nectriaceae</taxon>
        <taxon>Fusarium</taxon>
        <taxon>Fusarium oxysporum species complex</taxon>
    </lineage>
</organism>
<protein>
    <recommendedName>
        <fullName evidence="12">Fusaric acid cluster transcription factor FUB12</fullName>
    </recommendedName>
    <alternativeName>
        <fullName evidence="12">Fusaric acid biosynthesis protein 12</fullName>
    </alternativeName>
</protein>
<name>FUB12_FUSO4</name>
<reference key="1">
    <citation type="journal article" date="2010" name="Nature">
        <title>Comparative genomics reveals mobile pathogenicity chromosomes in Fusarium.</title>
        <authorList>
            <person name="Ma L.-J."/>
            <person name="van der Does H.C."/>
            <person name="Borkovich K.A."/>
            <person name="Coleman J.J."/>
            <person name="Daboussi M.-J."/>
            <person name="Di Pietro A."/>
            <person name="Dufresne M."/>
            <person name="Freitag M."/>
            <person name="Grabherr M."/>
            <person name="Henrissat B."/>
            <person name="Houterman P.M."/>
            <person name="Kang S."/>
            <person name="Shim W.-B."/>
            <person name="Woloshuk C."/>
            <person name="Xie X."/>
            <person name="Xu J.-R."/>
            <person name="Antoniw J."/>
            <person name="Baker S.E."/>
            <person name="Bluhm B.H."/>
            <person name="Breakspear A."/>
            <person name="Brown D.W."/>
            <person name="Butchko R.A.E."/>
            <person name="Chapman S."/>
            <person name="Coulson R."/>
            <person name="Coutinho P.M."/>
            <person name="Danchin E.G.J."/>
            <person name="Diener A."/>
            <person name="Gale L.R."/>
            <person name="Gardiner D.M."/>
            <person name="Goff S."/>
            <person name="Hammond-Kosack K.E."/>
            <person name="Hilburn K."/>
            <person name="Hua-Van A."/>
            <person name="Jonkers W."/>
            <person name="Kazan K."/>
            <person name="Kodira C.D."/>
            <person name="Koehrsen M."/>
            <person name="Kumar L."/>
            <person name="Lee Y.-H."/>
            <person name="Li L."/>
            <person name="Manners J.M."/>
            <person name="Miranda-Saavedra D."/>
            <person name="Mukherjee M."/>
            <person name="Park G."/>
            <person name="Park J."/>
            <person name="Park S.-Y."/>
            <person name="Proctor R.H."/>
            <person name="Regev A."/>
            <person name="Ruiz-Roldan M.C."/>
            <person name="Sain D."/>
            <person name="Sakthikumar S."/>
            <person name="Sykes S."/>
            <person name="Schwartz D.C."/>
            <person name="Turgeon B.G."/>
            <person name="Wapinski I."/>
            <person name="Yoder O."/>
            <person name="Young S."/>
            <person name="Zeng Q."/>
            <person name="Zhou S."/>
            <person name="Galagan J."/>
            <person name="Cuomo C.A."/>
            <person name="Kistler H.C."/>
            <person name="Rep M."/>
        </authorList>
    </citation>
    <scope>NUCLEOTIDE SEQUENCE [LARGE SCALE GENOMIC DNA]</scope>
    <source>
        <strain>4287 / CBS 123668 / FGSC 9935 / NRRL 34936</strain>
    </source>
</reference>
<reference key="2">
    <citation type="submission" date="2015-03" db="UniProtKB">
        <authorList>
            <consortium name="EnsemblFungi"/>
        </authorList>
    </citation>
    <scope>IDENTIFICATION</scope>
    <source>
        <strain>4287 / CBS 123668 / FGSC 9935 / NRRL 34936</strain>
    </source>
</reference>
<reference key="3">
    <citation type="journal article" date="2006" name="Planta">
        <title>Fusaric acid induces apoptosis in saffron root-tip cells: roles of caspase-like activity, cytochrome c, and H2O2.</title>
        <authorList>
            <person name="Samadi L."/>
            <person name="Shahsavan Behboodi B."/>
        </authorList>
    </citation>
    <scope>BIOTECHNOLOGY</scope>
</reference>
<reference key="4">
    <citation type="journal article" date="2008" name="J. Appl. Microbiol.">
        <title>Bikaverin and fusaric acid from Fusarium oxysporum show antioomycete activity against Phytophthora infestans.</title>
        <authorList>
            <person name="Son S.W."/>
            <person name="Kim H.Y."/>
            <person name="Choi G.J."/>
            <person name="Lim H.K."/>
            <person name="Jang K.S."/>
            <person name="Lee S.O."/>
            <person name="Lee S."/>
            <person name="Sung N.D."/>
            <person name="Kim J.C."/>
        </authorList>
    </citation>
    <scope>BIOTECHNOLOGY</scope>
</reference>
<reference key="5">
    <citation type="journal article" date="2011" name="Arch. Pharm. Res.">
        <title>Antimycobacterial activity of fusaric acid from a mangrove endophyte and its metal complexes.</title>
        <authorList>
            <person name="Pan J.H."/>
            <person name="Chen Y."/>
            <person name="Huang Y.H."/>
            <person name="Tao Y.W."/>
            <person name="Wang J."/>
            <person name="Li Y."/>
            <person name="Peng Y."/>
            <person name="Dong T."/>
            <person name="Lai X.M."/>
            <person name="Lin Y.C."/>
        </authorList>
    </citation>
    <scope>BIOTECHNOLOGY</scope>
</reference>
<reference key="6">
    <citation type="journal article" date="2011" name="Toxicon">
        <title>Phytotoxicity of fusaric acid and analogs to cotton.</title>
        <authorList>
            <person name="Stipanovic R.D."/>
            <person name="Puckhaber L.S."/>
            <person name="Liu J."/>
            <person name="Bell A.A."/>
        </authorList>
    </citation>
    <scope>BIOTECHNOLOGY</scope>
</reference>
<reference key="7">
    <citation type="journal article" date="2012" name="Planta Med.">
        <title>In vitro acanthamoebicidal activity of fusaric acid and dehydrofusaric acid from an endophytic fungus Fusarium sp. Tlau3.</title>
        <authorList>
            <person name="Boonman N."/>
            <person name="Prachya S."/>
            <person name="Boonmee A."/>
            <person name="Kittakoop P."/>
            <person name="Wiyakrutta S."/>
            <person name="Sriubolmas N."/>
            <person name="Warit S."/>
            <person name="Dharmkrong-At Chusattayanond A."/>
        </authorList>
    </citation>
    <scope>BIOTECHNOLOGY</scope>
</reference>
<reference key="8">
    <citation type="journal article" date="2013" name="Planta">
        <title>Fusaric acid induction of programmed cell death modulated through nitric oxide signalling in tobacco suspension cells.</title>
        <authorList>
            <person name="Jiao J."/>
            <person name="Zhou B."/>
            <person name="Zhu X."/>
            <person name="Gao Z."/>
            <person name="Liang Y."/>
        </authorList>
    </citation>
    <scope>BIOTECHNOLOGY</scope>
</reference>
<reference key="9">
    <citation type="journal article" date="2013" name="PLoS ONE">
        <title>Contamination of bananas with beauvericin and fusaric acid produced by Fusarium oxysporum f. sp. cubense.</title>
        <authorList>
            <person name="Li C."/>
            <person name="Zuo C."/>
            <person name="Deng G."/>
            <person name="Kuang R."/>
            <person name="Yang Q."/>
            <person name="Hu C."/>
            <person name="Sheng O."/>
            <person name="Zhang S."/>
            <person name="Ma L."/>
            <person name="Wei Y."/>
            <person name="Yang J."/>
            <person name="Liu S."/>
            <person name="Biswas M.K."/>
            <person name="Viljoen A."/>
            <person name="Yi G."/>
        </authorList>
    </citation>
    <scope>BIOTECHNOLOGY</scope>
</reference>
<reference key="10">
    <citation type="journal article" date="2015" name="Mol. Plant Microbe Interact.">
        <title>Identification of a 12-gene fusaric acid biosynthetic gene cluster in Fusarium species through comparative and functional genomics.</title>
        <authorList>
            <person name="Brown D.W."/>
            <person name="Lee S.H."/>
            <person name="Kim L.H."/>
            <person name="Ryu J.G."/>
            <person name="Lee S."/>
            <person name="Seo Y."/>
            <person name="Kim Y.H."/>
            <person name="Busman M."/>
            <person name="Yun S.H."/>
            <person name="Proctor R.H."/>
            <person name="Lee T."/>
        </authorList>
    </citation>
    <scope>IDENTIFICATION</scope>
</reference>
<feature type="chain" id="PRO_0000437332" description="Fusaric acid cluster transcription factor FUB12">
    <location>
        <begin position="1"/>
        <end position="661"/>
    </location>
</feature>
<feature type="DNA-binding region" description="Zn(2)-C6 fungal-type" evidence="2">
    <location>
        <begin position="17"/>
        <end position="48"/>
    </location>
</feature>
<feature type="region of interest" description="Disordered" evidence="3">
    <location>
        <begin position="57"/>
        <end position="131"/>
    </location>
</feature>
<feature type="region of interest" description="Disordered" evidence="3">
    <location>
        <begin position="151"/>
        <end position="184"/>
    </location>
</feature>
<feature type="compositionally biased region" description="Polar residues" evidence="3">
    <location>
        <begin position="73"/>
        <end position="98"/>
    </location>
</feature>
<feature type="compositionally biased region" description="Basic and acidic residues" evidence="3">
    <location>
        <begin position="99"/>
        <end position="109"/>
    </location>
</feature>
<feature type="compositionally biased region" description="Polar residues" evidence="3">
    <location>
        <begin position="110"/>
        <end position="119"/>
    </location>
</feature>
<feature type="compositionally biased region" description="Basic and acidic residues" evidence="3">
    <location>
        <begin position="120"/>
        <end position="129"/>
    </location>
</feature>
<sequence>MPLPSRASSTPKISKACVPCRTRKIKCNAAVVGLPCGSCVSRECPDDCVLSARKRRTVKVRNAEAPRSRKNIPDTNGSVLSPRQQQLPTNVSRQTTDSSHSDPVEESIHASHTGSSLRNDTPHSRDRRPPGQAQADLLYLNILQDTVNDTSAAQTDASDHQSNDEPDDSFNSQIHHWNPPPQLDDVDNEYLAKKKVFELPPPRFMDDIVKAYFDYVHPFAPILNRTDFIQSYRLGTCCLFLLHAVAAAASLYVTHDVLLGCGYPDRSTAQASFFSKAKLFHDFHCQGDPLSMLQGSMILGAIILDHPSDRDFQYWFHNSVRRASKMGVQNACLRDDGSQKLYRRIWWVLHNRDIFHFFINTQNMRLLANAPPIRPLTEADWETEDIEQWSGILSPISQAQKVSLIAQCELAQIFGNVMSVVTSSTPSAEEIHKRILPLDAWRTSLPDRMQLMASFADGEIYHLEALTTSYRFECIMCRLLRRGRWQMSDGGLREWAQQRFRSAIFELDTIVKRVMINNTIQKLPTTFITTITALLALHIESALDAAESSLIRSMARISVQHTMLALDQIRDTPAIKRALPAFEIVLSKNKLYPTSSSDTEQINTMQAISQDQTLNDGHILQPAQADMTLPQDDQSFLYGDFIGFDFLDRWQMEQLDFTGIY</sequence>
<keyword id="KW-0238">DNA-binding</keyword>
<keyword id="KW-0479">Metal-binding</keyword>
<keyword id="KW-0539">Nucleus</keyword>
<keyword id="KW-1185">Reference proteome</keyword>
<keyword id="KW-0804">Transcription</keyword>
<keyword id="KW-0805">Transcription regulation</keyword>
<keyword id="KW-0862">Zinc</keyword>
<evidence type="ECO:0000250" key="1">
    <source>
        <dbReference type="UniProtKB" id="S0DRX3"/>
    </source>
</evidence>
<evidence type="ECO:0000255" key="2">
    <source>
        <dbReference type="PROSITE-ProRule" id="PRU00227"/>
    </source>
</evidence>
<evidence type="ECO:0000256" key="3">
    <source>
        <dbReference type="SAM" id="MobiDB-lite"/>
    </source>
</evidence>
<evidence type="ECO:0000269" key="4">
    <source>
    </source>
</evidence>
<evidence type="ECO:0000269" key="5">
    <source>
    </source>
</evidence>
<evidence type="ECO:0000269" key="6">
    <source>
    </source>
</evidence>
<evidence type="ECO:0000269" key="7">
    <source>
    </source>
</evidence>
<evidence type="ECO:0000269" key="8">
    <source>
    </source>
</evidence>
<evidence type="ECO:0000269" key="9">
    <source>
    </source>
</evidence>
<evidence type="ECO:0000269" key="10">
    <source>
    </source>
</evidence>
<evidence type="ECO:0000269" key="11">
    <source>
    </source>
</evidence>
<evidence type="ECO:0000303" key="12">
    <source>
    </source>
</evidence>
<evidence type="ECO:0000305" key="13"/>
<proteinExistence type="evidence at protein level"/>
<dbReference type="EMBL" id="DS231721">
    <property type="protein sequence ID" value="KNB17089.1"/>
    <property type="status" value="ALT_SEQ"/>
    <property type="molecule type" value="Genomic_DNA"/>
</dbReference>
<dbReference type="RefSeq" id="XP_018255134.1">
    <property type="nucleotide sequence ID" value="XM_018395305.1"/>
</dbReference>
<dbReference type="SMR" id="A0A0D2YFZ7"/>
<dbReference type="EnsemblFungi" id="FOXG_15235T0">
    <property type="protein sequence ID" value="FOXG_15235P0"/>
    <property type="gene ID" value="FOXG_15235"/>
</dbReference>
<dbReference type="GeneID" id="28956312"/>
<dbReference type="KEGG" id="fox:FOXG_15235"/>
<dbReference type="OMA" id="DRWQMEQ"/>
<dbReference type="OrthoDB" id="85270at110618"/>
<dbReference type="Proteomes" id="UP000009097">
    <property type="component" value="Unassembled WGS sequence"/>
</dbReference>
<dbReference type="GO" id="GO:0005634">
    <property type="term" value="C:nucleus"/>
    <property type="evidence" value="ECO:0007669"/>
    <property type="project" value="UniProtKB-SubCell"/>
</dbReference>
<dbReference type="GO" id="GO:0003677">
    <property type="term" value="F:DNA binding"/>
    <property type="evidence" value="ECO:0007669"/>
    <property type="project" value="UniProtKB-KW"/>
</dbReference>
<dbReference type="GO" id="GO:0000981">
    <property type="term" value="F:DNA-binding transcription factor activity, RNA polymerase II-specific"/>
    <property type="evidence" value="ECO:0007669"/>
    <property type="project" value="InterPro"/>
</dbReference>
<dbReference type="GO" id="GO:0008270">
    <property type="term" value="F:zinc ion binding"/>
    <property type="evidence" value="ECO:0007669"/>
    <property type="project" value="InterPro"/>
</dbReference>
<dbReference type="GO" id="GO:0006351">
    <property type="term" value="P:DNA-templated transcription"/>
    <property type="evidence" value="ECO:0007669"/>
    <property type="project" value="InterPro"/>
</dbReference>
<dbReference type="CDD" id="cd12148">
    <property type="entry name" value="fungal_TF_MHR"/>
    <property type="match status" value="1"/>
</dbReference>
<dbReference type="CDD" id="cd00067">
    <property type="entry name" value="GAL4"/>
    <property type="match status" value="1"/>
</dbReference>
<dbReference type="Gene3D" id="4.10.240.10">
    <property type="entry name" value="Zn(2)-C6 fungal-type DNA-binding domain"/>
    <property type="match status" value="1"/>
</dbReference>
<dbReference type="InterPro" id="IPR052073">
    <property type="entry name" value="Amide_Lactam_Regulators"/>
</dbReference>
<dbReference type="InterPro" id="IPR007219">
    <property type="entry name" value="Transcription_factor_dom_fun"/>
</dbReference>
<dbReference type="InterPro" id="IPR036864">
    <property type="entry name" value="Zn2-C6_fun-type_DNA-bd_sf"/>
</dbReference>
<dbReference type="InterPro" id="IPR001138">
    <property type="entry name" value="Zn2Cys6_DnaBD"/>
</dbReference>
<dbReference type="PANTHER" id="PTHR47171">
    <property type="entry name" value="FARA-RELATED"/>
    <property type="match status" value="1"/>
</dbReference>
<dbReference type="PANTHER" id="PTHR47171:SF3">
    <property type="entry name" value="FARA-RELATED"/>
    <property type="match status" value="1"/>
</dbReference>
<dbReference type="Pfam" id="PF04082">
    <property type="entry name" value="Fungal_trans"/>
    <property type="match status" value="1"/>
</dbReference>
<dbReference type="Pfam" id="PF00172">
    <property type="entry name" value="Zn_clus"/>
    <property type="match status" value="1"/>
</dbReference>
<dbReference type="SMART" id="SM00066">
    <property type="entry name" value="GAL4"/>
    <property type="match status" value="1"/>
</dbReference>
<dbReference type="SUPFAM" id="SSF57701">
    <property type="entry name" value="Zn2/Cys6 DNA-binding domain"/>
    <property type="match status" value="1"/>
</dbReference>
<dbReference type="PROSITE" id="PS00463">
    <property type="entry name" value="ZN2_CY6_FUNGAL_1"/>
    <property type="match status" value="1"/>
</dbReference>
<dbReference type="PROSITE" id="PS50048">
    <property type="entry name" value="ZN2_CY6_FUNGAL_2"/>
    <property type="match status" value="1"/>
</dbReference>
<gene>
    <name evidence="12" type="primary">FUB12</name>
    <name type="ORF">FOXG_15235</name>
</gene>
<comment type="function">
    <text evidence="1 11">Efflux pump involved in export of biosynthesis of fusaric acid, a mycotoxin with low to moderate toxicity to animals and humans, but with high phytotoxic properties (PubMed:25372119). Constitutes a self-protecting mechanism of the fungus against critical levels of FSA within the cell (By similarity).</text>
</comment>
<comment type="subcellular location">
    <subcellularLocation>
        <location evidence="2">Nucleus</location>
    </subcellularLocation>
</comment>
<comment type="biotechnology">
    <text evidence="4 5 6 7 8 9 10">Fusaric acid is phytotoxic to plants such as cotton and banana (PubMed:20955724, PubMed:23922960). It has been shown to induce programmed cell death in plants (PubMed:16868776, PubMed:23838885). In addition to a mild toxicity to animals, fusaric acid exhibits acanthamoebicidal, antioomycete, and antimycobacterial activities (PubMed:17927749, PubMed:21811925, PubMed:22864988).</text>
</comment>
<comment type="sequence caution" evidence="13">
    <conflict type="erroneous gene model prediction">
        <sequence resource="EMBL-CDS" id="KNB17089"/>
    </conflict>
</comment>
<accession>A0A0D2YFZ7</accession>
<accession>A0A0J9W1U5</accession>